<name>Y653_VIBC1</name>
<keyword id="KW-0378">Hydrolase</keyword>
<keyword id="KW-0479">Metal-binding</keyword>
<keyword id="KW-0482">Metalloprotease</keyword>
<keyword id="KW-0645">Protease</keyword>
<keyword id="KW-0862">Zinc</keyword>
<dbReference type="EMBL" id="CP000789">
    <property type="protein sequence ID" value="ABU69655.1"/>
    <property type="molecule type" value="Genomic_DNA"/>
</dbReference>
<dbReference type="RefSeq" id="WP_012126812.1">
    <property type="nucleotide sequence ID" value="NC_009783.1"/>
</dbReference>
<dbReference type="SMR" id="A7MSP7"/>
<dbReference type="KEGG" id="vha:VIBHAR_00653"/>
<dbReference type="PATRIC" id="fig|338187.25.peg.1962"/>
<dbReference type="Proteomes" id="UP000008152">
    <property type="component" value="Chromosome I"/>
</dbReference>
<dbReference type="GO" id="GO:0046872">
    <property type="term" value="F:metal ion binding"/>
    <property type="evidence" value="ECO:0007669"/>
    <property type="project" value="UniProtKB-KW"/>
</dbReference>
<dbReference type="GO" id="GO:0008237">
    <property type="term" value="F:metallopeptidase activity"/>
    <property type="evidence" value="ECO:0007669"/>
    <property type="project" value="UniProtKB-KW"/>
</dbReference>
<dbReference type="GO" id="GO:0006508">
    <property type="term" value="P:proteolysis"/>
    <property type="evidence" value="ECO:0007669"/>
    <property type="project" value="UniProtKB-KW"/>
</dbReference>
<dbReference type="CDD" id="cd08071">
    <property type="entry name" value="MPN_DUF2466"/>
    <property type="match status" value="1"/>
</dbReference>
<dbReference type="FunFam" id="3.40.140.10:FF:000032">
    <property type="entry name" value="DNA repair protein RadC"/>
    <property type="match status" value="1"/>
</dbReference>
<dbReference type="Gene3D" id="1.10.150.20">
    <property type="entry name" value="5' to 3' exonuclease, C-terminal subdomain"/>
    <property type="match status" value="1"/>
</dbReference>
<dbReference type="Gene3D" id="3.40.140.10">
    <property type="entry name" value="Cytidine Deaminase, domain 2"/>
    <property type="match status" value="1"/>
</dbReference>
<dbReference type="InterPro" id="IPR037518">
    <property type="entry name" value="MPN"/>
</dbReference>
<dbReference type="InterPro" id="IPR025657">
    <property type="entry name" value="RadC_JAB"/>
</dbReference>
<dbReference type="InterPro" id="IPR010994">
    <property type="entry name" value="RuvA_2-like"/>
</dbReference>
<dbReference type="InterPro" id="IPR001405">
    <property type="entry name" value="UPF0758"/>
</dbReference>
<dbReference type="InterPro" id="IPR020891">
    <property type="entry name" value="UPF0758_CS"/>
</dbReference>
<dbReference type="InterPro" id="IPR046778">
    <property type="entry name" value="UPF0758_N"/>
</dbReference>
<dbReference type="NCBIfam" id="NF000642">
    <property type="entry name" value="PRK00024.1"/>
    <property type="match status" value="1"/>
</dbReference>
<dbReference type="NCBIfam" id="TIGR00608">
    <property type="entry name" value="radc"/>
    <property type="match status" value="1"/>
</dbReference>
<dbReference type="PANTHER" id="PTHR30471">
    <property type="entry name" value="DNA REPAIR PROTEIN RADC"/>
    <property type="match status" value="1"/>
</dbReference>
<dbReference type="PANTHER" id="PTHR30471:SF3">
    <property type="entry name" value="UPF0758 PROTEIN YEES-RELATED"/>
    <property type="match status" value="1"/>
</dbReference>
<dbReference type="Pfam" id="PF04002">
    <property type="entry name" value="RadC"/>
    <property type="match status" value="1"/>
</dbReference>
<dbReference type="Pfam" id="PF20582">
    <property type="entry name" value="UPF0758_N"/>
    <property type="match status" value="1"/>
</dbReference>
<dbReference type="SUPFAM" id="SSF102712">
    <property type="entry name" value="JAB1/MPN domain"/>
    <property type="match status" value="1"/>
</dbReference>
<dbReference type="SUPFAM" id="SSF47781">
    <property type="entry name" value="RuvA domain 2-like"/>
    <property type="match status" value="1"/>
</dbReference>
<dbReference type="PROSITE" id="PS50249">
    <property type="entry name" value="MPN"/>
    <property type="match status" value="1"/>
</dbReference>
<dbReference type="PROSITE" id="PS01302">
    <property type="entry name" value="UPF0758"/>
    <property type="match status" value="1"/>
</dbReference>
<feature type="chain" id="PRO_1000001702" description="UPF0758 protein VIBHAR_00653">
    <location>
        <begin position="1"/>
        <end position="224"/>
    </location>
</feature>
<feature type="domain" description="MPN" evidence="1">
    <location>
        <begin position="102"/>
        <end position="224"/>
    </location>
</feature>
<feature type="short sequence motif" description="JAMM motif" evidence="1">
    <location>
        <begin position="173"/>
        <end position="186"/>
    </location>
</feature>
<feature type="binding site" evidence="1">
    <location>
        <position position="173"/>
    </location>
    <ligand>
        <name>Zn(2+)</name>
        <dbReference type="ChEBI" id="CHEBI:29105"/>
        <note>catalytic</note>
    </ligand>
</feature>
<feature type="binding site" evidence="1">
    <location>
        <position position="175"/>
    </location>
    <ligand>
        <name>Zn(2+)</name>
        <dbReference type="ChEBI" id="CHEBI:29105"/>
        <note>catalytic</note>
    </ligand>
</feature>
<feature type="binding site" evidence="1">
    <location>
        <position position="186"/>
    </location>
    <ligand>
        <name>Zn(2+)</name>
        <dbReference type="ChEBI" id="CHEBI:29105"/>
        <note>catalytic</note>
    </ligand>
</feature>
<protein>
    <recommendedName>
        <fullName>UPF0758 protein VIBHAR_00653</fullName>
    </recommendedName>
</protein>
<proteinExistence type="inferred from homology"/>
<accession>A7MSP7</accession>
<reference key="1">
    <citation type="submission" date="2007-08" db="EMBL/GenBank/DDBJ databases">
        <authorList>
            <consortium name="The Vibrio harveyi Genome Sequencing Project"/>
            <person name="Bassler B."/>
            <person name="Clifton S.W."/>
            <person name="Fulton L."/>
            <person name="Delehaunty K."/>
            <person name="Fronick C."/>
            <person name="Harrison M."/>
            <person name="Markivic C."/>
            <person name="Fulton R."/>
            <person name="Tin-Wollam A.-M."/>
            <person name="Shah N."/>
            <person name="Pepin K."/>
            <person name="Nash W."/>
            <person name="Thiruvilangam P."/>
            <person name="Bhonagiri V."/>
            <person name="Waters C."/>
            <person name="Tu K.C."/>
            <person name="Irgon J."/>
            <person name="Wilson R.K."/>
        </authorList>
    </citation>
    <scope>NUCLEOTIDE SEQUENCE [LARGE SCALE GENOMIC DNA]</scope>
    <source>
        <strain>ATCC BAA-1116 / BB120</strain>
    </source>
</reference>
<evidence type="ECO:0000255" key="1">
    <source>
        <dbReference type="PROSITE-ProRule" id="PRU01182"/>
    </source>
</evidence>
<evidence type="ECO:0000305" key="2"/>
<sequence length="224" mass="25340">MTLKTLPNESMPREKLLQRGPQALSDAELLAIFLRTGTQGMNVIELSDFLIQDFGSLRQLFSASEKEFCQHKGLGQAKYVQLQAVLEMTQRYLAETLKRGDALTSPEQTKLYLSSILRDRQREAFYILFLDNQHRVIKDEILFEGTLDAASVYPREVVKRALHHNAAALILAHNHPSGVAEPSQADRRITRRLIDALGLVDIRILDHFVIGDGESVSFAERGWI</sequence>
<gene>
    <name type="ordered locus">VIBHAR_00653</name>
</gene>
<organism>
    <name type="scientific">Vibrio campbellii (strain ATCC BAA-1116)</name>
    <dbReference type="NCBI Taxonomy" id="2902295"/>
    <lineage>
        <taxon>Bacteria</taxon>
        <taxon>Pseudomonadati</taxon>
        <taxon>Pseudomonadota</taxon>
        <taxon>Gammaproteobacteria</taxon>
        <taxon>Vibrionales</taxon>
        <taxon>Vibrionaceae</taxon>
        <taxon>Vibrio</taxon>
    </lineage>
</organism>
<comment type="similarity">
    <text evidence="2">Belongs to the UPF0758 family.</text>
</comment>